<feature type="chain" id="PRO_0000329567" description="Polyribonucleotide nucleotidyltransferase">
    <location>
        <begin position="1"/>
        <end position="732"/>
    </location>
</feature>
<feature type="domain" description="KH" evidence="1">
    <location>
        <begin position="581"/>
        <end position="641"/>
    </location>
</feature>
<feature type="domain" description="S1 motif" evidence="1">
    <location>
        <begin position="672"/>
        <end position="731"/>
    </location>
</feature>
<feature type="binding site" evidence="1">
    <location>
        <position position="515"/>
    </location>
    <ligand>
        <name>Mg(2+)</name>
        <dbReference type="ChEBI" id="CHEBI:18420"/>
    </ligand>
</feature>
<feature type="binding site" evidence="1">
    <location>
        <position position="521"/>
    </location>
    <ligand>
        <name>Mg(2+)</name>
        <dbReference type="ChEBI" id="CHEBI:18420"/>
    </ligand>
</feature>
<sequence length="732" mass="80117">MQYSIEVNNQVEIFDLNKVAKQASGAVLLRVKNTVVLATVAREDVQVEEDFLPLTVQYIEKAYAAGKIPGGYVKRETKPGDFETLTARIIDRSLRPLFPKGYAYPTQIVVMVLSADPEVDLQVVSLNAASVALYLSDIPVNRPVCGVRVGYIDDKFVINPSNSELKQSAIDLYVAGTKDELLMIEMRSLPQQTTQLIPMVAIEPMIDPSLSDSMAQKQVMNEFSEDKMVEAIDFAGKAILRASSAYEEAFKEHKKEDAALELKPEIENENIAIYIDKFYKAEVKNAINQMAKSERASELGKIAKQISSDEVAQKEGWDEAVITNVLGKYKKKIVREQIINEGIRADGRGLEEVRPISIETNVLPNAHGSCLFTRGQTQALVVATLGTDSDAQMYDILTEKAPLVEKFMFNYNFPGFSVGEASPLKAPGRRELGHGNLAKRALAPSIDLASPYTIRVVSEILESNGSSSMASVCGGSLALRAAGVNTQKLVAGVAMGLIFEGEKHAVLTDIMGLEDHDGDMDFKVAGTSDGITALQMDIKLGGISLEVLKEALYQAKRGREHILALMTQADKNIEINEDVLPKLELFNVDPSKIVDIIGQAGKTIKEIIEKFEVSIDLDREKGEVKIAGGAKKNVDAAKDYIISITSKENSRSFGKKPFKHDKDRVKPTFNIGDEFTGSVKSVVDFGVFIELKDGVDGLLHISKIKSPLNVGDQVKVCVSEQKGNKISLSLVE</sequence>
<keyword id="KW-0963">Cytoplasm</keyword>
<keyword id="KW-0460">Magnesium</keyword>
<keyword id="KW-0479">Metal-binding</keyword>
<keyword id="KW-0548">Nucleotidyltransferase</keyword>
<keyword id="KW-0694">RNA-binding</keyword>
<keyword id="KW-0808">Transferase</keyword>
<dbReference type="EC" id="2.7.7.8" evidence="1"/>
<dbReference type="EMBL" id="CP000792">
    <property type="protein sequence ID" value="EAT99186.1"/>
    <property type="molecule type" value="Genomic_DNA"/>
</dbReference>
<dbReference type="RefSeq" id="WP_012140218.1">
    <property type="nucleotide sequence ID" value="NC_009802.2"/>
</dbReference>
<dbReference type="SMR" id="A7ZEX0"/>
<dbReference type="STRING" id="360104.CCC13826_0488"/>
<dbReference type="KEGG" id="cco:CCC13826_0488"/>
<dbReference type="eggNOG" id="COG1185">
    <property type="taxonomic scope" value="Bacteria"/>
</dbReference>
<dbReference type="HOGENOM" id="CLU_004217_2_2_7"/>
<dbReference type="OrthoDB" id="9804305at2"/>
<dbReference type="Proteomes" id="UP000001121">
    <property type="component" value="Chromosome"/>
</dbReference>
<dbReference type="GO" id="GO:0005829">
    <property type="term" value="C:cytosol"/>
    <property type="evidence" value="ECO:0007669"/>
    <property type="project" value="TreeGrafter"/>
</dbReference>
<dbReference type="GO" id="GO:0000175">
    <property type="term" value="F:3'-5'-RNA exonuclease activity"/>
    <property type="evidence" value="ECO:0007669"/>
    <property type="project" value="TreeGrafter"/>
</dbReference>
<dbReference type="GO" id="GO:0000287">
    <property type="term" value="F:magnesium ion binding"/>
    <property type="evidence" value="ECO:0007669"/>
    <property type="project" value="UniProtKB-UniRule"/>
</dbReference>
<dbReference type="GO" id="GO:0004654">
    <property type="term" value="F:polyribonucleotide nucleotidyltransferase activity"/>
    <property type="evidence" value="ECO:0007669"/>
    <property type="project" value="UniProtKB-UniRule"/>
</dbReference>
<dbReference type="GO" id="GO:0003723">
    <property type="term" value="F:RNA binding"/>
    <property type="evidence" value="ECO:0007669"/>
    <property type="project" value="UniProtKB-UniRule"/>
</dbReference>
<dbReference type="GO" id="GO:0006402">
    <property type="term" value="P:mRNA catabolic process"/>
    <property type="evidence" value="ECO:0007669"/>
    <property type="project" value="UniProtKB-UniRule"/>
</dbReference>
<dbReference type="GO" id="GO:0006396">
    <property type="term" value="P:RNA processing"/>
    <property type="evidence" value="ECO:0007669"/>
    <property type="project" value="InterPro"/>
</dbReference>
<dbReference type="CDD" id="cd02393">
    <property type="entry name" value="KH-I_PNPase"/>
    <property type="match status" value="1"/>
</dbReference>
<dbReference type="CDD" id="cd11364">
    <property type="entry name" value="RNase_PH_PNPase_2"/>
    <property type="match status" value="1"/>
</dbReference>
<dbReference type="FunFam" id="3.30.1370.10:FF:000001">
    <property type="entry name" value="Polyribonucleotide nucleotidyltransferase"/>
    <property type="match status" value="1"/>
</dbReference>
<dbReference type="FunFam" id="3.30.230.70:FF:000026">
    <property type="entry name" value="Polyribonucleotide nucleotidyltransferase"/>
    <property type="match status" value="1"/>
</dbReference>
<dbReference type="FunFam" id="3.30.230.70:FF:000029">
    <property type="entry name" value="Polyribonucleotide nucleotidyltransferase"/>
    <property type="match status" value="1"/>
</dbReference>
<dbReference type="Gene3D" id="3.30.230.70">
    <property type="entry name" value="GHMP Kinase, N-terminal domain"/>
    <property type="match status" value="2"/>
</dbReference>
<dbReference type="Gene3D" id="3.30.1370.10">
    <property type="entry name" value="K Homology domain, type 1"/>
    <property type="match status" value="1"/>
</dbReference>
<dbReference type="Gene3D" id="2.40.50.140">
    <property type="entry name" value="Nucleic acid-binding proteins"/>
    <property type="match status" value="1"/>
</dbReference>
<dbReference type="HAMAP" id="MF_01595">
    <property type="entry name" value="PNPase"/>
    <property type="match status" value="1"/>
</dbReference>
<dbReference type="InterPro" id="IPR001247">
    <property type="entry name" value="ExoRNase_PH_dom1"/>
</dbReference>
<dbReference type="InterPro" id="IPR015847">
    <property type="entry name" value="ExoRNase_PH_dom2"/>
</dbReference>
<dbReference type="InterPro" id="IPR036345">
    <property type="entry name" value="ExoRNase_PH_dom2_sf"/>
</dbReference>
<dbReference type="InterPro" id="IPR004087">
    <property type="entry name" value="KH_dom"/>
</dbReference>
<dbReference type="InterPro" id="IPR004088">
    <property type="entry name" value="KH_dom_type_1"/>
</dbReference>
<dbReference type="InterPro" id="IPR036612">
    <property type="entry name" value="KH_dom_type_1_sf"/>
</dbReference>
<dbReference type="InterPro" id="IPR012340">
    <property type="entry name" value="NA-bd_OB-fold"/>
</dbReference>
<dbReference type="InterPro" id="IPR012162">
    <property type="entry name" value="PNPase"/>
</dbReference>
<dbReference type="InterPro" id="IPR027408">
    <property type="entry name" value="PNPase/RNase_PH_dom_sf"/>
</dbReference>
<dbReference type="InterPro" id="IPR015848">
    <property type="entry name" value="PNPase_PH_RNA-bd_bac/org-type"/>
</dbReference>
<dbReference type="InterPro" id="IPR020568">
    <property type="entry name" value="Ribosomal_Su5_D2-typ_SF"/>
</dbReference>
<dbReference type="InterPro" id="IPR003029">
    <property type="entry name" value="S1_domain"/>
</dbReference>
<dbReference type="NCBIfam" id="NF008805">
    <property type="entry name" value="PRK11824.1"/>
    <property type="match status" value="1"/>
</dbReference>
<dbReference type="PANTHER" id="PTHR11252">
    <property type="entry name" value="POLYRIBONUCLEOTIDE NUCLEOTIDYLTRANSFERASE"/>
    <property type="match status" value="1"/>
</dbReference>
<dbReference type="PANTHER" id="PTHR11252:SF0">
    <property type="entry name" value="POLYRIBONUCLEOTIDE NUCLEOTIDYLTRANSFERASE 1, MITOCHONDRIAL"/>
    <property type="match status" value="1"/>
</dbReference>
<dbReference type="Pfam" id="PF00013">
    <property type="entry name" value="KH_1"/>
    <property type="match status" value="1"/>
</dbReference>
<dbReference type="Pfam" id="PF03726">
    <property type="entry name" value="PNPase"/>
    <property type="match status" value="1"/>
</dbReference>
<dbReference type="Pfam" id="PF01138">
    <property type="entry name" value="RNase_PH"/>
    <property type="match status" value="2"/>
</dbReference>
<dbReference type="Pfam" id="PF03725">
    <property type="entry name" value="RNase_PH_C"/>
    <property type="match status" value="2"/>
</dbReference>
<dbReference type="Pfam" id="PF00575">
    <property type="entry name" value="S1"/>
    <property type="match status" value="1"/>
</dbReference>
<dbReference type="PIRSF" id="PIRSF005499">
    <property type="entry name" value="PNPase"/>
    <property type="match status" value="1"/>
</dbReference>
<dbReference type="SMART" id="SM00322">
    <property type="entry name" value="KH"/>
    <property type="match status" value="1"/>
</dbReference>
<dbReference type="SMART" id="SM00316">
    <property type="entry name" value="S1"/>
    <property type="match status" value="1"/>
</dbReference>
<dbReference type="SUPFAM" id="SSF54791">
    <property type="entry name" value="Eukaryotic type KH-domain (KH-domain type I)"/>
    <property type="match status" value="1"/>
</dbReference>
<dbReference type="SUPFAM" id="SSF50249">
    <property type="entry name" value="Nucleic acid-binding proteins"/>
    <property type="match status" value="1"/>
</dbReference>
<dbReference type="SUPFAM" id="SSF55666">
    <property type="entry name" value="Ribonuclease PH domain 2-like"/>
    <property type="match status" value="2"/>
</dbReference>
<dbReference type="SUPFAM" id="SSF54211">
    <property type="entry name" value="Ribosomal protein S5 domain 2-like"/>
    <property type="match status" value="2"/>
</dbReference>
<dbReference type="PROSITE" id="PS50084">
    <property type="entry name" value="KH_TYPE_1"/>
    <property type="match status" value="1"/>
</dbReference>
<dbReference type="PROSITE" id="PS50126">
    <property type="entry name" value="S1"/>
    <property type="match status" value="1"/>
</dbReference>
<organism>
    <name type="scientific">Campylobacter concisus (strain 13826)</name>
    <dbReference type="NCBI Taxonomy" id="360104"/>
    <lineage>
        <taxon>Bacteria</taxon>
        <taxon>Pseudomonadati</taxon>
        <taxon>Campylobacterota</taxon>
        <taxon>Epsilonproteobacteria</taxon>
        <taxon>Campylobacterales</taxon>
        <taxon>Campylobacteraceae</taxon>
        <taxon>Campylobacter</taxon>
    </lineage>
</organism>
<proteinExistence type="inferred from homology"/>
<reference key="1">
    <citation type="submission" date="2007-10" db="EMBL/GenBank/DDBJ databases">
        <title>Genome sequence of Campylobacter concisus 13826 isolated from human feces.</title>
        <authorList>
            <person name="Fouts D.E."/>
            <person name="Mongodin E.F."/>
            <person name="Puiu D."/>
            <person name="Sebastian Y."/>
            <person name="Miller W.G."/>
            <person name="Mandrell R.E."/>
            <person name="On S."/>
            <person name="Nelson K.E."/>
        </authorList>
    </citation>
    <scope>NUCLEOTIDE SEQUENCE [LARGE SCALE GENOMIC DNA]</scope>
    <source>
        <strain>13826</strain>
    </source>
</reference>
<gene>
    <name evidence="1" type="primary">pnp</name>
    <name type="ordered locus">Ccon26_14810</name>
    <name type="ORF">CCC13826_0488</name>
</gene>
<comment type="function">
    <text evidence="1">Involved in mRNA degradation. Catalyzes the phosphorolysis of single-stranded polyribonucleotides processively in the 3'- to 5'-direction.</text>
</comment>
<comment type="catalytic activity">
    <reaction evidence="1">
        <text>RNA(n+1) + phosphate = RNA(n) + a ribonucleoside 5'-diphosphate</text>
        <dbReference type="Rhea" id="RHEA:22096"/>
        <dbReference type="Rhea" id="RHEA-COMP:14527"/>
        <dbReference type="Rhea" id="RHEA-COMP:17342"/>
        <dbReference type="ChEBI" id="CHEBI:43474"/>
        <dbReference type="ChEBI" id="CHEBI:57930"/>
        <dbReference type="ChEBI" id="CHEBI:140395"/>
        <dbReference type="EC" id="2.7.7.8"/>
    </reaction>
</comment>
<comment type="cofactor">
    <cofactor evidence="1">
        <name>Mg(2+)</name>
        <dbReference type="ChEBI" id="CHEBI:18420"/>
    </cofactor>
</comment>
<comment type="subcellular location">
    <subcellularLocation>
        <location evidence="1">Cytoplasm</location>
    </subcellularLocation>
</comment>
<comment type="similarity">
    <text evidence="1">Belongs to the polyribonucleotide nucleotidyltransferase family.</text>
</comment>
<name>PNP_CAMC1</name>
<protein>
    <recommendedName>
        <fullName evidence="1">Polyribonucleotide nucleotidyltransferase</fullName>
        <ecNumber evidence="1">2.7.7.8</ecNumber>
    </recommendedName>
    <alternativeName>
        <fullName evidence="1">Polynucleotide phosphorylase</fullName>
        <shortName evidence="1">PNPase</shortName>
    </alternativeName>
</protein>
<accession>A7ZEX0</accession>
<evidence type="ECO:0000255" key="1">
    <source>
        <dbReference type="HAMAP-Rule" id="MF_01595"/>
    </source>
</evidence>